<accession>Q09898</accession>
<evidence type="ECO:0000250" key="1"/>
<evidence type="ECO:0000255" key="2">
    <source>
        <dbReference type="PROSITE-ProRule" id="PRU00159"/>
    </source>
</evidence>
<evidence type="ECO:0000255" key="3">
    <source>
        <dbReference type="PROSITE-ProRule" id="PRU00618"/>
    </source>
</evidence>
<evidence type="ECO:0000255" key="4">
    <source>
        <dbReference type="PROSITE-ProRule" id="PRU10027"/>
    </source>
</evidence>
<evidence type="ECO:0000256" key="5">
    <source>
        <dbReference type="SAM" id="MobiDB-lite"/>
    </source>
</evidence>
<evidence type="ECO:0000269" key="6">
    <source>
    </source>
</evidence>
<evidence type="ECO:0000269" key="7">
    <source>
    </source>
</evidence>
<evidence type="ECO:0000269" key="8">
    <source>
    </source>
</evidence>
<evidence type="ECO:0000269" key="9">
    <source>
    </source>
</evidence>
<feature type="chain" id="PRO_0000086654" description="Serine/threonine-protein kinase sid2">
    <location>
        <begin position="1"/>
        <end position="607"/>
    </location>
</feature>
<feature type="domain" description="Protein kinase" evidence="2">
    <location>
        <begin position="208"/>
        <end position="508"/>
    </location>
</feature>
<feature type="domain" description="AGC-kinase C-terminal" evidence="3">
    <location>
        <begin position="509"/>
        <end position="589"/>
    </location>
</feature>
<feature type="region of interest" description="Disordered" evidence="5">
    <location>
        <begin position="93"/>
        <end position="118"/>
    </location>
</feature>
<feature type="region of interest" description="Disordered" evidence="5">
    <location>
        <begin position="586"/>
        <end position="607"/>
    </location>
</feature>
<feature type="compositionally biased region" description="Basic and acidic residues" evidence="5">
    <location>
        <begin position="93"/>
        <end position="108"/>
    </location>
</feature>
<feature type="compositionally biased region" description="Polar residues" evidence="5">
    <location>
        <begin position="109"/>
        <end position="118"/>
    </location>
</feature>
<feature type="compositionally biased region" description="Low complexity" evidence="5">
    <location>
        <begin position="589"/>
        <end position="607"/>
    </location>
</feature>
<feature type="active site" description="Proton acceptor" evidence="2 4">
    <location>
        <position position="331"/>
    </location>
</feature>
<feature type="binding site" evidence="2">
    <location>
        <begin position="214"/>
        <end position="222"/>
    </location>
    <ligand>
        <name>ATP</name>
        <dbReference type="ChEBI" id="CHEBI:30616"/>
    </ligand>
</feature>
<feature type="binding site" evidence="2">
    <location>
        <position position="237"/>
    </location>
    <ligand>
        <name>ATP</name>
        <dbReference type="ChEBI" id="CHEBI:30616"/>
    </ligand>
</feature>
<feature type="modified residue" description="Phosphoserine" evidence="9">
    <location>
        <position position="56"/>
    </location>
</feature>
<feature type="modified residue" description="Phosphoserine" evidence="9">
    <location>
        <position position="60"/>
    </location>
</feature>
<feature type="modified residue" description="Phosphoserine" evidence="9">
    <location>
        <position position="65"/>
    </location>
</feature>
<feature type="modified residue" description="Phosphoserine" evidence="9">
    <location>
        <position position="86"/>
    </location>
</feature>
<feature type="modified residue" description="Phosphotyrosine" evidence="1">
    <location>
        <position position="219"/>
    </location>
</feature>
<feature type="modified residue" description="Phosphoserine" evidence="9">
    <location>
        <position position="402"/>
    </location>
</feature>
<protein>
    <recommendedName>
        <fullName>Serine/threonine-protein kinase sid2</fullName>
        <ecNumber>2.7.11.1</ecNumber>
    </recommendedName>
</protein>
<reference key="1">
    <citation type="journal article" date="2002" name="Nature">
        <title>The genome sequence of Schizosaccharomyces pombe.</title>
        <authorList>
            <person name="Wood V."/>
            <person name="Gwilliam R."/>
            <person name="Rajandream M.A."/>
            <person name="Lyne M.H."/>
            <person name="Lyne R."/>
            <person name="Stewart A."/>
            <person name="Sgouros J.G."/>
            <person name="Peat N."/>
            <person name="Hayles J."/>
            <person name="Baker S.G."/>
            <person name="Basham D."/>
            <person name="Bowman S."/>
            <person name="Brooks K."/>
            <person name="Brown D."/>
            <person name="Brown S."/>
            <person name="Chillingworth T."/>
            <person name="Churcher C.M."/>
            <person name="Collins M."/>
            <person name="Connor R."/>
            <person name="Cronin A."/>
            <person name="Davis P."/>
            <person name="Feltwell T."/>
            <person name="Fraser A."/>
            <person name="Gentles S."/>
            <person name="Goble A."/>
            <person name="Hamlin N."/>
            <person name="Harris D.E."/>
            <person name="Hidalgo J."/>
            <person name="Hodgson G."/>
            <person name="Holroyd S."/>
            <person name="Hornsby T."/>
            <person name="Howarth S."/>
            <person name="Huckle E.J."/>
            <person name="Hunt S."/>
            <person name="Jagels K."/>
            <person name="James K.D."/>
            <person name="Jones L."/>
            <person name="Jones M."/>
            <person name="Leather S."/>
            <person name="McDonald S."/>
            <person name="McLean J."/>
            <person name="Mooney P."/>
            <person name="Moule S."/>
            <person name="Mungall K.L."/>
            <person name="Murphy L.D."/>
            <person name="Niblett D."/>
            <person name="Odell C."/>
            <person name="Oliver K."/>
            <person name="O'Neil S."/>
            <person name="Pearson D."/>
            <person name="Quail M.A."/>
            <person name="Rabbinowitsch E."/>
            <person name="Rutherford K.M."/>
            <person name="Rutter S."/>
            <person name="Saunders D."/>
            <person name="Seeger K."/>
            <person name="Sharp S."/>
            <person name="Skelton J."/>
            <person name="Simmonds M.N."/>
            <person name="Squares R."/>
            <person name="Squares S."/>
            <person name="Stevens K."/>
            <person name="Taylor K."/>
            <person name="Taylor R.G."/>
            <person name="Tivey A."/>
            <person name="Walsh S.V."/>
            <person name="Warren T."/>
            <person name="Whitehead S."/>
            <person name="Woodward J.R."/>
            <person name="Volckaert G."/>
            <person name="Aert R."/>
            <person name="Robben J."/>
            <person name="Grymonprez B."/>
            <person name="Weltjens I."/>
            <person name="Vanstreels E."/>
            <person name="Rieger M."/>
            <person name="Schaefer M."/>
            <person name="Mueller-Auer S."/>
            <person name="Gabel C."/>
            <person name="Fuchs M."/>
            <person name="Duesterhoeft A."/>
            <person name="Fritzc C."/>
            <person name="Holzer E."/>
            <person name="Moestl D."/>
            <person name="Hilbert H."/>
            <person name="Borzym K."/>
            <person name="Langer I."/>
            <person name="Beck A."/>
            <person name="Lehrach H."/>
            <person name="Reinhardt R."/>
            <person name="Pohl T.M."/>
            <person name="Eger P."/>
            <person name="Zimmermann W."/>
            <person name="Wedler H."/>
            <person name="Wambutt R."/>
            <person name="Purnelle B."/>
            <person name="Goffeau A."/>
            <person name="Cadieu E."/>
            <person name="Dreano S."/>
            <person name="Gloux S."/>
            <person name="Lelaure V."/>
            <person name="Mottier S."/>
            <person name="Galibert F."/>
            <person name="Aves S.J."/>
            <person name="Xiang Z."/>
            <person name="Hunt C."/>
            <person name="Moore K."/>
            <person name="Hurst S.M."/>
            <person name="Lucas M."/>
            <person name="Rochet M."/>
            <person name="Gaillardin C."/>
            <person name="Tallada V.A."/>
            <person name="Garzon A."/>
            <person name="Thode G."/>
            <person name="Daga R.R."/>
            <person name="Cruzado L."/>
            <person name="Jimenez J."/>
            <person name="Sanchez M."/>
            <person name="del Rey F."/>
            <person name="Benito J."/>
            <person name="Dominguez A."/>
            <person name="Revuelta J.L."/>
            <person name="Moreno S."/>
            <person name="Armstrong J."/>
            <person name="Forsburg S.L."/>
            <person name="Cerutti L."/>
            <person name="Lowe T."/>
            <person name="McCombie W.R."/>
            <person name="Paulsen I."/>
            <person name="Potashkin J."/>
            <person name="Shpakovski G.V."/>
            <person name="Ussery D."/>
            <person name="Barrell B.G."/>
            <person name="Nurse P."/>
        </authorList>
    </citation>
    <scope>NUCLEOTIDE SEQUENCE [LARGE SCALE GENOMIC DNA]</scope>
    <source>
        <strain>972 / ATCC 24843</strain>
    </source>
</reference>
<reference key="2">
    <citation type="journal article" date="1999" name="J. Cell Biol.">
        <title>Sid2p, a spindle pole body kinase that regulates the onset of cytokinesis.</title>
        <authorList>
            <person name="Sparks C.A."/>
            <person name="Morphew M."/>
            <person name="McCollum D."/>
        </authorList>
    </citation>
    <scope>FUNCTION</scope>
    <scope>SUBCELLULAR LOCATION</scope>
</reference>
<reference key="3">
    <citation type="journal article" date="2000" name="J. Cell Sci.">
        <title>The S. pombe orthologue of the S. cerevisiae mob1 gene is essential and functions in signalling the onset of septum formation.</title>
        <authorList>
            <person name="Salimova E."/>
            <person name="Sohrmann M."/>
            <person name="Fournier N."/>
            <person name="Simanis V."/>
        </authorList>
    </citation>
    <scope>INTERACTION WITH MOB1</scope>
</reference>
<reference key="4">
    <citation type="journal article" date="2004" name="Curr. Biol.">
        <title>Sid4p-Cdc11p assembles the septation initiation network and its regulators at the S. pombe SPB.</title>
        <authorList>
            <person name="Morrell J.L."/>
            <person name="Tomlin G.C."/>
            <person name="Rajagopalan S."/>
            <person name="Venkatram S."/>
            <person name="Feoktistova A.S."/>
            <person name="Tasto J.J."/>
            <person name="Mehta S."/>
            <person name="Jennings J.L."/>
            <person name="Link A."/>
            <person name="Balasubramanian M.K."/>
            <person name="Gould K.L."/>
        </authorList>
    </citation>
    <scope>INTERACTION WITH CDC11</scope>
</reference>
<reference key="5">
    <citation type="journal article" date="2006" name="Nat. Biotechnol.">
        <title>ORFeome cloning and global analysis of protein localization in the fission yeast Schizosaccharomyces pombe.</title>
        <authorList>
            <person name="Matsuyama A."/>
            <person name="Arai R."/>
            <person name="Yashiroda Y."/>
            <person name="Shirai A."/>
            <person name="Kamata A."/>
            <person name="Sekido S."/>
            <person name="Kobayashi Y."/>
            <person name="Hashimoto A."/>
            <person name="Hamamoto M."/>
            <person name="Hiraoka Y."/>
            <person name="Horinouchi S."/>
            <person name="Yoshida M."/>
        </authorList>
    </citation>
    <scope>SUBCELLULAR LOCATION [LARGE SCALE ANALYSIS]</scope>
</reference>
<reference key="6">
    <citation type="journal article" date="2008" name="J. Proteome Res.">
        <title>Phosphoproteome analysis of fission yeast.</title>
        <authorList>
            <person name="Wilson-Grady J.T."/>
            <person name="Villen J."/>
            <person name="Gygi S.P."/>
        </authorList>
    </citation>
    <scope>PHOSPHORYLATION [LARGE SCALE ANALYSIS] AT SER-56; SER-60; SER-65; SER-86 AND SER-402</scope>
    <scope>IDENTIFICATION BY MASS SPECTROMETRY</scope>
</reference>
<comment type="function">
    <text evidence="6">Part of a signaling pathway. Required for initiation of medial ring constriction and septation.</text>
</comment>
<comment type="catalytic activity">
    <reaction>
        <text>L-seryl-[protein] + ATP = O-phospho-L-seryl-[protein] + ADP + H(+)</text>
        <dbReference type="Rhea" id="RHEA:17989"/>
        <dbReference type="Rhea" id="RHEA-COMP:9863"/>
        <dbReference type="Rhea" id="RHEA-COMP:11604"/>
        <dbReference type="ChEBI" id="CHEBI:15378"/>
        <dbReference type="ChEBI" id="CHEBI:29999"/>
        <dbReference type="ChEBI" id="CHEBI:30616"/>
        <dbReference type="ChEBI" id="CHEBI:83421"/>
        <dbReference type="ChEBI" id="CHEBI:456216"/>
        <dbReference type="EC" id="2.7.11.1"/>
    </reaction>
</comment>
<comment type="catalytic activity">
    <reaction>
        <text>L-threonyl-[protein] + ATP = O-phospho-L-threonyl-[protein] + ADP + H(+)</text>
        <dbReference type="Rhea" id="RHEA:46608"/>
        <dbReference type="Rhea" id="RHEA-COMP:11060"/>
        <dbReference type="Rhea" id="RHEA-COMP:11605"/>
        <dbReference type="ChEBI" id="CHEBI:15378"/>
        <dbReference type="ChEBI" id="CHEBI:30013"/>
        <dbReference type="ChEBI" id="CHEBI:30616"/>
        <dbReference type="ChEBI" id="CHEBI:61977"/>
        <dbReference type="ChEBI" id="CHEBI:456216"/>
        <dbReference type="EC" id="2.7.11.1"/>
    </reaction>
</comment>
<comment type="subunit">
    <text evidence="7 8">Interacts with mob1 and cdc11.</text>
</comment>
<comment type="interaction">
    <interactant intactId="EBI-1563447">
        <id>Q09898</id>
    </interactant>
    <interactant intactId="EBI-1563433">
        <id>O94360</id>
        <label>mob1</label>
    </interactant>
    <organismsDiffer>false</organismsDiffer>
    <experiments>3</experiments>
</comment>
<comment type="subcellular location">
    <subcellularLocation>
        <location>Cytoplasm</location>
        <location>Cytoskeleton</location>
        <location>Microtubule organizing center</location>
        <location>Spindle pole body</location>
    </subcellularLocation>
    <subcellularLocation>
        <location>Cytoplasm</location>
    </subcellularLocation>
</comment>
<comment type="similarity">
    <text evidence="2">Belongs to the protein kinase superfamily. Ser/Thr protein kinase family.</text>
</comment>
<keyword id="KW-0067">ATP-binding</keyword>
<keyword id="KW-0131">Cell cycle</keyword>
<keyword id="KW-0132">Cell division</keyword>
<keyword id="KW-0963">Cytoplasm</keyword>
<keyword id="KW-0206">Cytoskeleton</keyword>
<keyword id="KW-0418">Kinase</keyword>
<keyword id="KW-0498">Mitosis</keyword>
<keyword id="KW-0547">Nucleotide-binding</keyword>
<keyword id="KW-0597">Phosphoprotein</keyword>
<keyword id="KW-1185">Reference proteome</keyword>
<keyword id="KW-0717">Septation</keyword>
<keyword id="KW-0723">Serine/threonine-protein kinase</keyword>
<keyword id="KW-0808">Transferase</keyword>
<name>SID2_SCHPO</name>
<sequence>MNRVNDMSPVEGDLGLQLSSEADKKFDAYMKRHGLFEPGNLSNNDKERNLEDQFNSMKLSPVASSKENYPDNHMHSKHISKLPIASPIPRGLDRSGELSYKDNNHWSDRSSTGSPRWENGSMNLSVEEMEKVVQPKVKRMATICQMFFLDHYFEQLHYLYTRKQRARLFEEQLLKEPDSRRDELVKRYNGRERVYLRKRRTRISHGDFQTITQVGQGGYGSVWLARKRDTKEIVALKIMNKSVLHKMDEIRHVLTERDILTTANSEWLVRLLYAFQDTSNIYLAMEFVPGGDFRTLLSNSGVLRDHHAKFYATEMFLAIDALHQLGYIHRDLKPENFLVGASGHIKLTDFGLSSGIISKKKIESMKIRLQEVNNVVVPERSMRERRQVFRTLLSQDPVYAHSVVGSPDYMAPEVLRGENYNHSVDYWSLGCIMYECLSGFPPFSGSNVNETWSNLKNWRKCFQRPHYDDPRDLEFNWRDDAWDFVCHCITDPKDRFCSLKQVMQHPYFSKIDWKNVRTAYRPPFVPDLNSEIDAGYFDDFTNENDMSKYKEVHEKQAAIANMVNTFNKPKRNAFIGFTFRHQKNSHPTSSSSALSSPLSAPSFGTLL</sequence>
<organism>
    <name type="scientific">Schizosaccharomyces pombe (strain 972 / ATCC 24843)</name>
    <name type="common">Fission yeast</name>
    <dbReference type="NCBI Taxonomy" id="284812"/>
    <lineage>
        <taxon>Eukaryota</taxon>
        <taxon>Fungi</taxon>
        <taxon>Dikarya</taxon>
        <taxon>Ascomycota</taxon>
        <taxon>Taphrinomycotina</taxon>
        <taxon>Schizosaccharomycetes</taxon>
        <taxon>Schizosaccharomycetales</taxon>
        <taxon>Schizosaccharomycetaceae</taxon>
        <taxon>Schizosaccharomyces</taxon>
    </lineage>
</organism>
<dbReference type="EC" id="2.7.11.1"/>
<dbReference type="EMBL" id="CU329670">
    <property type="protein sequence ID" value="CAA91776.1"/>
    <property type="molecule type" value="Genomic_DNA"/>
</dbReference>
<dbReference type="PIR" id="S62556">
    <property type="entry name" value="S62556"/>
</dbReference>
<dbReference type="RefSeq" id="NP_592848.1">
    <property type="nucleotide sequence ID" value="NM_001018249.2"/>
</dbReference>
<dbReference type="SMR" id="Q09898"/>
<dbReference type="BioGRID" id="278096">
    <property type="interactions" value="67"/>
</dbReference>
<dbReference type="FunCoup" id="Q09898">
    <property type="interactions" value="81"/>
</dbReference>
<dbReference type="IntAct" id="Q09898">
    <property type="interactions" value="1"/>
</dbReference>
<dbReference type="STRING" id="284812.Q09898"/>
<dbReference type="iPTMnet" id="Q09898"/>
<dbReference type="PaxDb" id="4896-SPAC24B11.11c.1"/>
<dbReference type="EnsemblFungi" id="SPAC24B11.11c.1">
    <property type="protein sequence ID" value="SPAC24B11.11c.1:pep"/>
    <property type="gene ID" value="SPAC24B11.11c"/>
</dbReference>
<dbReference type="GeneID" id="2541599"/>
<dbReference type="KEGG" id="spo:2541599"/>
<dbReference type="PomBase" id="SPAC24B11.11c">
    <property type="gene designation" value="sid2"/>
</dbReference>
<dbReference type="VEuPathDB" id="FungiDB:SPAC24B11.11c"/>
<dbReference type="eggNOG" id="KOG0605">
    <property type="taxonomic scope" value="Eukaryota"/>
</dbReference>
<dbReference type="HOGENOM" id="CLU_000288_67_4_1"/>
<dbReference type="InParanoid" id="Q09898"/>
<dbReference type="OMA" id="KLRVDQF"/>
<dbReference type="PhylomeDB" id="Q09898"/>
<dbReference type="CD-CODE" id="576F0A76">
    <property type="entry name" value="Centrosome"/>
</dbReference>
<dbReference type="PRO" id="PR:Q09898"/>
<dbReference type="Proteomes" id="UP000002485">
    <property type="component" value="Chromosome I"/>
</dbReference>
<dbReference type="GO" id="GO:0032153">
    <property type="term" value="C:cell division site"/>
    <property type="evidence" value="ECO:0000314"/>
    <property type="project" value="PomBase"/>
</dbReference>
<dbReference type="GO" id="GO:0005737">
    <property type="term" value="C:cytoplasm"/>
    <property type="evidence" value="ECO:0000314"/>
    <property type="project" value="PomBase"/>
</dbReference>
<dbReference type="GO" id="GO:0110085">
    <property type="term" value="C:mitotic actomyosin contractile ring"/>
    <property type="evidence" value="ECO:0000314"/>
    <property type="project" value="PomBase"/>
</dbReference>
<dbReference type="GO" id="GO:0120105">
    <property type="term" value="C:mitotic actomyosin contractile ring, intermediate layer"/>
    <property type="evidence" value="ECO:0000314"/>
    <property type="project" value="PomBase"/>
</dbReference>
<dbReference type="GO" id="GO:0044732">
    <property type="term" value="C:mitotic spindle pole body"/>
    <property type="evidence" value="ECO:0000314"/>
    <property type="project" value="PomBase"/>
</dbReference>
<dbReference type="GO" id="GO:0034973">
    <property type="term" value="C:Sid2-Mob1 complex"/>
    <property type="evidence" value="ECO:0000353"/>
    <property type="project" value="PomBase"/>
</dbReference>
<dbReference type="GO" id="GO:0005816">
    <property type="term" value="C:spindle pole body"/>
    <property type="evidence" value="ECO:0000318"/>
    <property type="project" value="GO_Central"/>
</dbReference>
<dbReference type="GO" id="GO:0005524">
    <property type="term" value="F:ATP binding"/>
    <property type="evidence" value="ECO:0000255"/>
    <property type="project" value="PomBase"/>
</dbReference>
<dbReference type="GO" id="GO:0106310">
    <property type="term" value="F:protein serine kinase activity"/>
    <property type="evidence" value="ECO:0007669"/>
    <property type="project" value="RHEA"/>
</dbReference>
<dbReference type="GO" id="GO:0004674">
    <property type="term" value="F:protein serine/threonine kinase activity"/>
    <property type="evidence" value="ECO:0000314"/>
    <property type="project" value="PomBase"/>
</dbReference>
<dbReference type="GO" id="GO:0000917">
    <property type="term" value="P:division septum assembly"/>
    <property type="evidence" value="ECO:0007669"/>
    <property type="project" value="UniProtKB-KW"/>
</dbReference>
<dbReference type="GO" id="GO:0035556">
    <property type="term" value="P:intracellular signal transduction"/>
    <property type="evidence" value="ECO:0000318"/>
    <property type="project" value="GO_Central"/>
</dbReference>
<dbReference type="GO" id="GO:0044878">
    <property type="term" value="P:mitotic cytokinesis checkpoint signaling"/>
    <property type="evidence" value="ECO:0000315"/>
    <property type="project" value="PomBase"/>
</dbReference>
<dbReference type="GO" id="GO:0140325">
    <property type="term" value="P:negative regulation of protein localization to medial cortex"/>
    <property type="evidence" value="ECO:0000269"/>
    <property type="project" value="PomBase"/>
</dbReference>
<dbReference type="GO" id="GO:0010971">
    <property type="term" value="P:positive regulation of G2/M transition of mitotic cell cycle"/>
    <property type="evidence" value="ECO:0000315"/>
    <property type="project" value="PomBase"/>
</dbReference>
<dbReference type="GO" id="GO:1903501">
    <property type="term" value="P:positive regulation of mitotic actomyosin contractile ring assembly"/>
    <property type="evidence" value="ECO:0000315"/>
    <property type="project" value="PomBase"/>
</dbReference>
<dbReference type="GO" id="GO:1903473">
    <property type="term" value="P:positive regulation of mitotic actomyosin contractile ring contraction"/>
    <property type="evidence" value="ECO:0000315"/>
    <property type="project" value="PomBase"/>
</dbReference>
<dbReference type="GO" id="GO:1902846">
    <property type="term" value="P:positive regulation of mitotic spindle elongation"/>
    <property type="evidence" value="ECO:0000315"/>
    <property type="project" value="PomBase"/>
</dbReference>
<dbReference type="GO" id="GO:1902854">
    <property type="term" value="P:positive regulation of nuclear migration during mitotic telophase"/>
    <property type="evidence" value="ECO:0000315"/>
    <property type="project" value="PomBase"/>
</dbReference>
<dbReference type="GO" id="GO:1905758">
    <property type="term" value="P:positive regulation of primary cell septum biogenesis"/>
    <property type="evidence" value="ECO:0000315"/>
    <property type="project" value="PomBase"/>
</dbReference>
<dbReference type="GO" id="GO:0032956">
    <property type="term" value="P:regulation of actin cytoskeleton organization"/>
    <property type="evidence" value="ECO:0000315"/>
    <property type="project" value="PomBase"/>
</dbReference>
<dbReference type="GO" id="GO:0031028">
    <property type="term" value="P:septation initiation signaling"/>
    <property type="evidence" value="ECO:0000315"/>
    <property type="project" value="PomBase"/>
</dbReference>
<dbReference type="CDD" id="cd21776">
    <property type="entry name" value="MobB_Sid2p-like"/>
    <property type="match status" value="1"/>
</dbReference>
<dbReference type="CDD" id="cd05600">
    <property type="entry name" value="STKc_Sid2p_like"/>
    <property type="match status" value="1"/>
</dbReference>
<dbReference type="FunFam" id="1.10.510.10:FF:000141">
    <property type="entry name" value="Non-specific serine/threonine protein kinase"/>
    <property type="match status" value="1"/>
</dbReference>
<dbReference type="FunFam" id="1.10.510.10:FF:000319">
    <property type="entry name" value="Non-specific serine/threonine protein kinase"/>
    <property type="match status" value="1"/>
</dbReference>
<dbReference type="FunFam" id="3.30.200.20:FF:000109">
    <property type="entry name" value="Non-specific serine/threonine protein kinase"/>
    <property type="match status" value="1"/>
</dbReference>
<dbReference type="Gene3D" id="3.30.200.20">
    <property type="entry name" value="Phosphorylase Kinase, domain 1"/>
    <property type="match status" value="1"/>
</dbReference>
<dbReference type="Gene3D" id="1.10.510.10">
    <property type="entry name" value="Transferase(Phosphotransferase) domain 1"/>
    <property type="match status" value="1"/>
</dbReference>
<dbReference type="InterPro" id="IPR000961">
    <property type="entry name" value="AGC-kinase_C"/>
</dbReference>
<dbReference type="InterPro" id="IPR011009">
    <property type="entry name" value="Kinase-like_dom_sf"/>
</dbReference>
<dbReference type="InterPro" id="IPR017892">
    <property type="entry name" value="Pkinase_C"/>
</dbReference>
<dbReference type="InterPro" id="IPR000719">
    <property type="entry name" value="Prot_kinase_dom"/>
</dbReference>
<dbReference type="InterPro" id="IPR017441">
    <property type="entry name" value="Protein_kinase_ATP_BS"/>
</dbReference>
<dbReference type="InterPro" id="IPR008271">
    <property type="entry name" value="Ser/Thr_kinase_AS"/>
</dbReference>
<dbReference type="InterPro" id="IPR050236">
    <property type="entry name" value="Ser_Thr_kinase_AGC"/>
</dbReference>
<dbReference type="PANTHER" id="PTHR24356:SF417">
    <property type="entry name" value="CELL CYCLE PROTEIN KINASE DBF2-RELATED"/>
    <property type="match status" value="1"/>
</dbReference>
<dbReference type="PANTHER" id="PTHR24356">
    <property type="entry name" value="SERINE/THREONINE-PROTEIN KINASE"/>
    <property type="match status" value="1"/>
</dbReference>
<dbReference type="Pfam" id="PF00069">
    <property type="entry name" value="Pkinase"/>
    <property type="match status" value="1"/>
</dbReference>
<dbReference type="Pfam" id="PF00433">
    <property type="entry name" value="Pkinase_C"/>
    <property type="match status" value="1"/>
</dbReference>
<dbReference type="SMART" id="SM00133">
    <property type="entry name" value="S_TK_X"/>
    <property type="match status" value="1"/>
</dbReference>
<dbReference type="SMART" id="SM00220">
    <property type="entry name" value="S_TKc"/>
    <property type="match status" value="1"/>
</dbReference>
<dbReference type="SUPFAM" id="SSF56112">
    <property type="entry name" value="Protein kinase-like (PK-like)"/>
    <property type="match status" value="1"/>
</dbReference>
<dbReference type="PROSITE" id="PS51285">
    <property type="entry name" value="AGC_KINASE_CTER"/>
    <property type="match status" value="1"/>
</dbReference>
<dbReference type="PROSITE" id="PS00107">
    <property type="entry name" value="PROTEIN_KINASE_ATP"/>
    <property type="match status" value="1"/>
</dbReference>
<dbReference type="PROSITE" id="PS50011">
    <property type="entry name" value="PROTEIN_KINASE_DOM"/>
    <property type="match status" value="1"/>
</dbReference>
<dbReference type="PROSITE" id="PS00108">
    <property type="entry name" value="PROTEIN_KINASE_ST"/>
    <property type="match status" value="1"/>
</dbReference>
<proteinExistence type="evidence at protein level"/>
<gene>
    <name type="primary">sid2</name>
    <name type="ORF">SPAC24B11.11c</name>
</gene>